<keyword id="KW-0002">3D-structure</keyword>
<keyword id="KW-0007">Acetylation</keyword>
<keyword id="KW-0152">Cholesterol biosynthesis</keyword>
<keyword id="KW-0153">Cholesterol metabolism</keyword>
<keyword id="KW-0963">Cytoplasm</keyword>
<keyword id="KW-0225">Disease variant</keyword>
<keyword id="KW-0238">DNA-binding</keyword>
<keyword id="KW-0242">Dwarfism</keyword>
<keyword id="KW-0256">Endoplasmic reticulum</keyword>
<keyword id="KW-0444">Lipid biosynthesis</keyword>
<keyword id="KW-0443">Lipid metabolism</keyword>
<keyword id="KW-0472">Membrane</keyword>
<keyword id="KW-0539">Nucleus</keyword>
<keyword id="KW-0560">Oxidoreductase</keyword>
<keyword id="KW-0597">Phosphoprotein</keyword>
<keyword id="KW-1267">Proteomics identification</keyword>
<keyword id="KW-0675">Receptor</keyword>
<keyword id="KW-1185">Reference proteome</keyword>
<keyword id="KW-0752">Steroid biosynthesis</keyword>
<keyword id="KW-0753">Steroid metabolism</keyword>
<keyword id="KW-0756">Sterol biosynthesis</keyword>
<keyword id="KW-1207">Sterol metabolism</keyword>
<keyword id="KW-0812">Transmembrane</keyword>
<keyword id="KW-1133">Transmembrane helix</keyword>
<accession>Q14739</accession>
<accession>B2R5P3</accession>
<accession>Q14740</accession>
<accession>Q53GU7</accession>
<accession>Q59FE6</accession>
<protein>
    <recommendedName>
        <fullName>Delta(14)-sterol reductase LBR</fullName>
        <shortName>Delta-14-SR</shortName>
        <ecNumber evidence="7 23">1.3.1.70</ecNumber>
    </recommendedName>
    <alternativeName>
        <fullName evidence="28">3-beta-hydroxysterol Delta (14)-reductase</fullName>
    </alternativeName>
    <alternativeName>
        <fullName>C-14 sterol reductase</fullName>
        <shortName>C14SR</shortName>
    </alternativeName>
    <alternativeName>
        <fullName evidence="27">Integral nuclear envelope inner membrane protein</fullName>
    </alternativeName>
    <alternativeName>
        <fullName>LMN2R</fullName>
    </alternativeName>
    <alternativeName>
        <fullName evidence="29 30">Lamin-B receptor</fullName>
    </alternativeName>
    <alternativeName>
        <fullName>Sterol C14-reductase</fullName>
    </alternativeName>
</protein>
<dbReference type="EC" id="1.3.1.70" evidence="7 23"/>
<dbReference type="EMBL" id="L25931">
    <property type="protein sequence ID" value="AAA59494.1"/>
    <property type="molecule type" value="mRNA"/>
</dbReference>
<dbReference type="EMBL" id="L25941">
    <property type="protein sequence ID" value="AAA59495.1"/>
    <property type="molecule type" value="Genomic_DNA"/>
</dbReference>
<dbReference type="EMBL" id="L25932">
    <property type="protein sequence ID" value="AAA59495.1"/>
    <property type="status" value="JOINED"/>
    <property type="molecule type" value="Genomic_DNA"/>
</dbReference>
<dbReference type="EMBL" id="L25933">
    <property type="protein sequence ID" value="AAA59495.1"/>
    <property type="status" value="JOINED"/>
    <property type="molecule type" value="Genomic_DNA"/>
</dbReference>
<dbReference type="EMBL" id="L25934">
    <property type="protein sequence ID" value="AAA59495.1"/>
    <property type="status" value="JOINED"/>
    <property type="molecule type" value="Genomic_DNA"/>
</dbReference>
<dbReference type="EMBL" id="L25935">
    <property type="protein sequence ID" value="AAA59495.1"/>
    <property type="status" value="JOINED"/>
    <property type="molecule type" value="Genomic_DNA"/>
</dbReference>
<dbReference type="EMBL" id="L25936">
    <property type="protein sequence ID" value="AAA59495.1"/>
    <property type="status" value="JOINED"/>
    <property type="molecule type" value="Genomic_DNA"/>
</dbReference>
<dbReference type="EMBL" id="L25937">
    <property type="protein sequence ID" value="AAA59495.1"/>
    <property type="status" value="JOINED"/>
    <property type="molecule type" value="Genomic_DNA"/>
</dbReference>
<dbReference type="EMBL" id="L25938">
    <property type="protein sequence ID" value="AAA59495.1"/>
    <property type="status" value="JOINED"/>
    <property type="molecule type" value="Genomic_DNA"/>
</dbReference>
<dbReference type="EMBL" id="L25939">
    <property type="protein sequence ID" value="AAA59495.1"/>
    <property type="status" value="JOINED"/>
    <property type="molecule type" value="Genomic_DNA"/>
</dbReference>
<dbReference type="EMBL" id="L25940">
    <property type="protein sequence ID" value="AAA59495.1"/>
    <property type="status" value="JOINED"/>
    <property type="molecule type" value="Genomic_DNA"/>
</dbReference>
<dbReference type="EMBL" id="AB209514">
    <property type="protein sequence ID" value="BAD92751.1"/>
    <property type="status" value="ALT_INIT"/>
    <property type="molecule type" value="mRNA"/>
</dbReference>
<dbReference type="EMBL" id="AK222834">
    <property type="protein sequence ID" value="BAD96554.1"/>
    <property type="molecule type" value="mRNA"/>
</dbReference>
<dbReference type="EMBL" id="AK312258">
    <property type="protein sequence ID" value="BAG35190.1"/>
    <property type="molecule type" value="mRNA"/>
</dbReference>
<dbReference type="EMBL" id="CH471098">
    <property type="protein sequence ID" value="EAW69741.1"/>
    <property type="molecule type" value="Genomic_DNA"/>
</dbReference>
<dbReference type="EMBL" id="BC020079">
    <property type="protein sequence ID" value="AAH20079.1"/>
    <property type="molecule type" value="mRNA"/>
</dbReference>
<dbReference type="CCDS" id="CCDS1545.1"/>
<dbReference type="PIR" id="A53616">
    <property type="entry name" value="A53616"/>
</dbReference>
<dbReference type="RefSeq" id="NP_002287.2">
    <property type="nucleotide sequence ID" value="NM_002296.3"/>
</dbReference>
<dbReference type="RefSeq" id="NP_919424.1">
    <property type="nucleotide sequence ID" value="NM_194442.3"/>
</dbReference>
<dbReference type="RefSeq" id="XP_011542487.1">
    <property type="nucleotide sequence ID" value="XM_011544185.4"/>
</dbReference>
<dbReference type="RefSeq" id="XP_054192529.1">
    <property type="nucleotide sequence ID" value="XM_054336554.1"/>
</dbReference>
<dbReference type="PDB" id="2DIG">
    <property type="method" value="NMR"/>
    <property type="chains" value="A=1-55"/>
</dbReference>
<dbReference type="PDBsum" id="2DIG"/>
<dbReference type="BMRB" id="Q14739"/>
<dbReference type="SMR" id="Q14739"/>
<dbReference type="BioGRID" id="110122">
    <property type="interactions" value="332"/>
</dbReference>
<dbReference type="DIP" id="DIP-5987N"/>
<dbReference type="FunCoup" id="Q14739">
    <property type="interactions" value="2525"/>
</dbReference>
<dbReference type="IntAct" id="Q14739">
    <property type="interactions" value="129"/>
</dbReference>
<dbReference type="MINT" id="Q14739"/>
<dbReference type="STRING" id="9606.ENSP00000339883"/>
<dbReference type="SwissLipids" id="SLP:000001239"/>
<dbReference type="GlyCosmos" id="Q14739">
    <property type="glycosylation" value="2 sites, 1 glycan"/>
</dbReference>
<dbReference type="GlyGen" id="Q14739">
    <property type="glycosylation" value="2 sites, 1 O-linked glycan (2 sites)"/>
</dbReference>
<dbReference type="iPTMnet" id="Q14739"/>
<dbReference type="PhosphoSitePlus" id="Q14739"/>
<dbReference type="SwissPalm" id="Q14739"/>
<dbReference type="BioMuta" id="LBR"/>
<dbReference type="DMDM" id="20141468"/>
<dbReference type="jPOST" id="Q14739"/>
<dbReference type="MassIVE" id="Q14739"/>
<dbReference type="PaxDb" id="9606-ENSP00000339883"/>
<dbReference type="PeptideAtlas" id="Q14739"/>
<dbReference type="PRIDE" id="Q14739"/>
<dbReference type="ProteomicsDB" id="60152"/>
<dbReference type="Pumba" id="Q14739"/>
<dbReference type="TopDownProteomics" id="Q14739"/>
<dbReference type="Antibodypedia" id="34642">
    <property type="antibodies" value="246 antibodies from 33 providers"/>
</dbReference>
<dbReference type="DNASU" id="3930"/>
<dbReference type="Ensembl" id="ENST00000272163.9">
    <property type="protein sequence ID" value="ENSP00000272163.4"/>
    <property type="gene ID" value="ENSG00000143815.15"/>
</dbReference>
<dbReference type="Ensembl" id="ENST00000338179.6">
    <property type="protein sequence ID" value="ENSP00000339883.2"/>
    <property type="gene ID" value="ENSG00000143815.15"/>
</dbReference>
<dbReference type="GeneID" id="3930"/>
<dbReference type="KEGG" id="hsa:3930"/>
<dbReference type="MANE-Select" id="ENST00000272163.9">
    <property type="protein sequence ID" value="ENSP00000272163.4"/>
    <property type="RefSeq nucleotide sequence ID" value="NM_002296.4"/>
    <property type="RefSeq protein sequence ID" value="NP_002287.2"/>
</dbReference>
<dbReference type="UCSC" id="uc001hoy.4">
    <property type="organism name" value="human"/>
</dbReference>
<dbReference type="AGR" id="HGNC:6518"/>
<dbReference type="CTD" id="3930"/>
<dbReference type="DisGeNET" id="3930"/>
<dbReference type="GeneCards" id="LBR"/>
<dbReference type="HGNC" id="HGNC:6518">
    <property type="gene designation" value="LBR"/>
</dbReference>
<dbReference type="HPA" id="ENSG00000143815">
    <property type="expression patterns" value="Low tissue specificity"/>
</dbReference>
<dbReference type="MalaCards" id="LBR"/>
<dbReference type="MIM" id="169400">
    <property type="type" value="phenotype"/>
</dbReference>
<dbReference type="MIM" id="215140">
    <property type="type" value="phenotype"/>
</dbReference>
<dbReference type="MIM" id="600024">
    <property type="type" value="gene"/>
</dbReference>
<dbReference type="MIM" id="613471">
    <property type="type" value="phenotype"/>
</dbReference>
<dbReference type="MIM" id="618019">
    <property type="type" value="phenotype"/>
</dbReference>
<dbReference type="neXtProt" id="NX_Q14739"/>
<dbReference type="OpenTargets" id="ENSG00000143815"/>
<dbReference type="Orphanet" id="1426">
    <property type="disease" value="Greenberg dysplasia"/>
</dbReference>
<dbReference type="Orphanet" id="448267">
    <property type="disease" value="Regressive spondylometaphyseal dysplasia"/>
</dbReference>
<dbReference type="Orphanet" id="779">
    <property type="disease" value="Reynolds syndrome"/>
</dbReference>
<dbReference type="PharmGKB" id="PA30304"/>
<dbReference type="VEuPathDB" id="HostDB:ENSG00000143815"/>
<dbReference type="eggNOG" id="KOG1435">
    <property type="taxonomic scope" value="Eukaryota"/>
</dbReference>
<dbReference type="GeneTree" id="ENSGT00390000000417"/>
<dbReference type="HOGENOM" id="CLU_015631_0_2_1"/>
<dbReference type="InParanoid" id="Q14739"/>
<dbReference type="OMA" id="HSSWHRY"/>
<dbReference type="OrthoDB" id="5326588at2759"/>
<dbReference type="PAN-GO" id="Q14739">
    <property type="GO annotations" value="3 GO annotations based on evolutionary models"/>
</dbReference>
<dbReference type="PhylomeDB" id="Q14739"/>
<dbReference type="TreeFam" id="TF101179"/>
<dbReference type="BioCyc" id="MetaCyc:HS07110-MONOMER"/>
<dbReference type="BRENDA" id="1.3.1.70">
    <property type="organism ID" value="2681"/>
</dbReference>
<dbReference type="PathwayCommons" id="Q14739"/>
<dbReference type="Reactome" id="R-HSA-191273">
    <property type="pathway name" value="Cholesterol biosynthesis"/>
</dbReference>
<dbReference type="Reactome" id="R-HSA-2995383">
    <property type="pathway name" value="Initiation of Nuclear Envelope (NE) Reformation"/>
</dbReference>
<dbReference type="Reactome" id="R-HSA-8980692">
    <property type="pathway name" value="RHOA GTPase cycle"/>
</dbReference>
<dbReference type="Reactome" id="R-HSA-9013106">
    <property type="pathway name" value="RHOC GTPase cycle"/>
</dbReference>
<dbReference type="Reactome" id="R-HSA-9013148">
    <property type="pathway name" value="CDC42 GTPase cycle"/>
</dbReference>
<dbReference type="Reactome" id="R-HSA-9013149">
    <property type="pathway name" value="RAC1 GTPase cycle"/>
</dbReference>
<dbReference type="Reactome" id="R-HSA-9013404">
    <property type="pathway name" value="RAC2 GTPase cycle"/>
</dbReference>
<dbReference type="Reactome" id="R-HSA-9013405">
    <property type="pathway name" value="RHOD GTPase cycle"/>
</dbReference>
<dbReference type="Reactome" id="R-HSA-9013408">
    <property type="pathway name" value="RHOG GTPase cycle"/>
</dbReference>
<dbReference type="Reactome" id="R-HSA-9013423">
    <property type="pathway name" value="RAC3 GTPase cycle"/>
</dbReference>
<dbReference type="Reactome" id="R-HSA-9022692">
    <property type="pathway name" value="Regulation of MECP2 expression and activity"/>
</dbReference>
<dbReference type="SignaLink" id="Q14739"/>
<dbReference type="SIGNOR" id="Q14739"/>
<dbReference type="UniPathway" id="UPA00063"/>
<dbReference type="BioGRID-ORCS" id="3930">
    <property type="hits" value="8 hits in 1166 CRISPR screens"/>
</dbReference>
<dbReference type="CD-CODE" id="98A5DA6D">
    <property type="entry name" value="Synthetic Condensate 000066"/>
</dbReference>
<dbReference type="CD-CODE" id="DEE660B4">
    <property type="entry name" value="Stress granule"/>
</dbReference>
<dbReference type="ChiTaRS" id="LBR">
    <property type="organism name" value="human"/>
</dbReference>
<dbReference type="EvolutionaryTrace" id="Q14739"/>
<dbReference type="GeneWiki" id="Lamin_B_receptor"/>
<dbReference type="GenomeRNAi" id="3930"/>
<dbReference type="Pharos" id="Q14739">
    <property type="development level" value="Tbio"/>
</dbReference>
<dbReference type="PRO" id="PR:Q14739"/>
<dbReference type="Proteomes" id="UP000005640">
    <property type="component" value="Chromosome 1"/>
</dbReference>
<dbReference type="RNAct" id="Q14739">
    <property type="molecule type" value="protein"/>
</dbReference>
<dbReference type="Bgee" id="ENSG00000143815">
    <property type="expression patterns" value="Expressed in trabecular bone tissue and 215 other cell types or tissues"/>
</dbReference>
<dbReference type="ExpressionAtlas" id="Q14739">
    <property type="expression patterns" value="baseline and differential"/>
</dbReference>
<dbReference type="GO" id="GO:0005737">
    <property type="term" value="C:cytoplasm"/>
    <property type="evidence" value="ECO:0000314"/>
    <property type="project" value="UniProtKB"/>
</dbReference>
<dbReference type="GO" id="GO:0005789">
    <property type="term" value="C:endoplasmic reticulum membrane"/>
    <property type="evidence" value="ECO:0000314"/>
    <property type="project" value="UniProtKB"/>
</dbReference>
<dbReference type="GO" id="GO:0001650">
    <property type="term" value="C:fibrillar center"/>
    <property type="evidence" value="ECO:0000314"/>
    <property type="project" value="HPA"/>
</dbReference>
<dbReference type="GO" id="GO:0016020">
    <property type="term" value="C:membrane"/>
    <property type="evidence" value="ECO:0000314"/>
    <property type="project" value="MGI"/>
</dbReference>
<dbReference type="GO" id="GO:0005635">
    <property type="term" value="C:nuclear envelope"/>
    <property type="evidence" value="ECO:0000304"/>
    <property type="project" value="Reactome"/>
</dbReference>
<dbReference type="GO" id="GO:0005637">
    <property type="term" value="C:nuclear inner membrane"/>
    <property type="evidence" value="ECO:0000314"/>
    <property type="project" value="UniProtKB"/>
</dbReference>
<dbReference type="GO" id="GO:0005652">
    <property type="term" value="C:nuclear lamina"/>
    <property type="evidence" value="ECO:0007669"/>
    <property type="project" value="Ensembl"/>
</dbReference>
<dbReference type="GO" id="GO:0031965">
    <property type="term" value="C:nuclear membrane"/>
    <property type="evidence" value="ECO:0000314"/>
    <property type="project" value="HPA"/>
</dbReference>
<dbReference type="GO" id="GO:0005654">
    <property type="term" value="C:nucleoplasm"/>
    <property type="evidence" value="ECO:0000314"/>
    <property type="project" value="HPA"/>
</dbReference>
<dbReference type="GO" id="GO:0005634">
    <property type="term" value="C:nucleus"/>
    <property type="evidence" value="ECO:0000314"/>
    <property type="project" value="UniProtKB"/>
</dbReference>
<dbReference type="GO" id="GO:0140463">
    <property type="term" value="F:chromatin-protein adaptor activity"/>
    <property type="evidence" value="ECO:0007669"/>
    <property type="project" value="Ensembl"/>
</dbReference>
<dbReference type="GO" id="GO:0070087">
    <property type="term" value="F:chromo shadow domain binding"/>
    <property type="evidence" value="ECO:0000353"/>
    <property type="project" value="BHF-UCL"/>
</dbReference>
<dbReference type="GO" id="GO:0050613">
    <property type="term" value="F:Delta14-sterol reductase activity"/>
    <property type="evidence" value="ECO:0000314"/>
    <property type="project" value="UniProtKB"/>
</dbReference>
<dbReference type="GO" id="GO:0003677">
    <property type="term" value="F:DNA binding"/>
    <property type="evidence" value="ECO:0000304"/>
    <property type="project" value="ProtInc"/>
</dbReference>
<dbReference type="GO" id="GO:0005521">
    <property type="term" value="F:lamin binding"/>
    <property type="evidence" value="ECO:0000304"/>
    <property type="project" value="ProtInc"/>
</dbReference>
<dbReference type="GO" id="GO:0070402">
    <property type="term" value="F:NADPH binding"/>
    <property type="evidence" value="ECO:0000315"/>
    <property type="project" value="UniProtKB"/>
</dbReference>
<dbReference type="GO" id="GO:0003723">
    <property type="term" value="F:RNA binding"/>
    <property type="evidence" value="ECO:0007005"/>
    <property type="project" value="UniProtKB"/>
</dbReference>
<dbReference type="GO" id="GO:0006695">
    <property type="term" value="P:cholesterol biosynthetic process"/>
    <property type="evidence" value="ECO:0000314"/>
    <property type="project" value="UniProtKB"/>
</dbReference>
<dbReference type="GO" id="GO:0030223">
    <property type="term" value="P:neutrophil differentiation"/>
    <property type="evidence" value="ECO:0000250"/>
    <property type="project" value="UniProtKB"/>
</dbReference>
<dbReference type="GO" id="GO:0060816">
    <property type="term" value="P:random inactivation of X chromosome"/>
    <property type="evidence" value="ECO:0007669"/>
    <property type="project" value="Ensembl"/>
</dbReference>
<dbReference type="CDD" id="cd20381">
    <property type="entry name" value="Tudor_LBR"/>
    <property type="match status" value="1"/>
</dbReference>
<dbReference type="FunFam" id="1.20.120.1630:FF:000001">
    <property type="entry name" value="delta(14)-sterol reductase isoform X1"/>
    <property type="match status" value="1"/>
</dbReference>
<dbReference type="FunFam" id="2.30.30.140:FF:000058">
    <property type="entry name" value="Lamin B receptor"/>
    <property type="match status" value="1"/>
</dbReference>
<dbReference type="Gene3D" id="1.20.120.1630">
    <property type="match status" value="1"/>
</dbReference>
<dbReference type="Gene3D" id="2.30.30.140">
    <property type="match status" value="1"/>
</dbReference>
<dbReference type="InterPro" id="IPR001171">
    <property type="entry name" value="ERG24_DHCR-like"/>
</dbReference>
<dbReference type="InterPro" id="IPR019023">
    <property type="entry name" value="Lamin-B_rcpt_of_tudor"/>
</dbReference>
<dbReference type="InterPro" id="IPR018083">
    <property type="entry name" value="Sterol_reductase_CS"/>
</dbReference>
<dbReference type="InterPro" id="IPR002999">
    <property type="entry name" value="Tudor"/>
</dbReference>
<dbReference type="PANTHER" id="PTHR21257">
    <property type="entry name" value="DELTA(14)-STEROL REDUCTASE"/>
    <property type="match status" value="1"/>
</dbReference>
<dbReference type="PANTHER" id="PTHR21257:SF55">
    <property type="entry name" value="DELTA(14)-STEROL REDUCTASE LBR"/>
    <property type="match status" value="1"/>
</dbReference>
<dbReference type="Pfam" id="PF01222">
    <property type="entry name" value="ERG4_ERG24"/>
    <property type="match status" value="1"/>
</dbReference>
<dbReference type="Pfam" id="PF09465">
    <property type="entry name" value="LBR_tudor"/>
    <property type="match status" value="1"/>
</dbReference>
<dbReference type="SMART" id="SM00333">
    <property type="entry name" value="TUDOR"/>
    <property type="match status" value="1"/>
</dbReference>
<dbReference type="SUPFAM" id="SSF63748">
    <property type="entry name" value="Tudor/PWWP/MBT"/>
    <property type="match status" value="1"/>
</dbReference>
<dbReference type="PROSITE" id="PS01017">
    <property type="entry name" value="STEROL_REDUCT_1"/>
    <property type="match status" value="1"/>
</dbReference>
<dbReference type="PROSITE" id="PS01018">
    <property type="entry name" value="STEROL_REDUCT_2"/>
    <property type="match status" value="1"/>
</dbReference>
<comment type="function">
    <text evidence="2 6 7 11 13 18 23">Catalyzes the reduction of the C14-unsaturated bond of lanosterol, as part of the metabolic pathway leading to cholesterol biosynthesis (PubMed:12618959, PubMed:16784888, PubMed:21327084, PubMed:27336722, PubMed:9630650). Plays a critical role in myeloid cell cholesterol biosynthesis which is essential to both myeloid cell growth and functional maturation (By similarity). Mediates the activation of NADPH oxidases, perhaps by maintaining critical levels of cholesterol required for membrane lipid raft formation during neutrophil differentiation (By similarity). Anchors the lamina and the heterochromatin to the inner nuclear membrane (PubMed:10828963).</text>
</comment>
<comment type="catalytic activity">
    <reaction evidence="7 11">
        <text>5alpha-cholest-8,14-dien-3beta-ol + NADPH + H(+) = 5alpha-cholest-8-en-3beta-ol + NADP(+)</text>
        <dbReference type="Rhea" id="RHEA:46456"/>
        <dbReference type="ChEBI" id="CHEBI:15378"/>
        <dbReference type="ChEBI" id="CHEBI:16608"/>
        <dbReference type="ChEBI" id="CHEBI:57783"/>
        <dbReference type="ChEBI" id="CHEBI:58349"/>
        <dbReference type="ChEBI" id="CHEBI:86131"/>
    </reaction>
</comment>
<comment type="catalytic activity">
    <reaction evidence="7 23">
        <text>4,4-dimethyl-5alpha-cholesta-8,24-dien-3beta-ol + NADP(+) = 4,4-dimethyl-5alpha-cholesta-8,14,24-trien-3beta-ol + NADPH + H(+)</text>
        <dbReference type="Rhea" id="RHEA:18561"/>
        <dbReference type="ChEBI" id="CHEBI:15378"/>
        <dbReference type="ChEBI" id="CHEBI:17813"/>
        <dbReference type="ChEBI" id="CHEBI:18364"/>
        <dbReference type="ChEBI" id="CHEBI:57783"/>
        <dbReference type="ChEBI" id="CHEBI:58349"/>
        <dbReference type="EC" id="1.3.1.70"/>
    </reaction>
</comment>
<comment type="catalytic activity">
    <reaction evidence="7 11 23">
        <text>4,4-dimethyl-8,14-cholestadien-3beta-ol + NADPH + H(+) = 4,4-dimethyl-5alpha-cholest-8-en-3beta-ol + NADP(+)</text>
        <dbReference type="Rhea" id="RHEA:46812"/>
        <dbReference type="ChEBI" id="CHEBI:15378"/>
        <dbReference type="ChEBI" id="CHEBI:57783"/>
        <dbReference type="ChEBI" id="CHEBI:58349"/>
        <dbReference type="ChEBI" id="CHEBI:78904"/>
        <dbReference type="ChEBI" id="CHEBI:87044"/>
    </reaction>
</comment>
<comment type="pathway">
    <text>Steroid biosynthesis; cholesterol biosynthesis.</text>
</comment>
<comment type="subunit">
    <text evidence="10 17 19 20 22">Interacts with CBX5 (PubMed:15882967, PubMed:9169472). Interacts with DNA (PubMed:8157662). Interaction with DNA is sequence independent with higher affinity for supercoiled and relaxed circular DNA than linear DNA (PubMed:8157662). Interacts with lamin B (PubMed:8157662). Interacts with CLNK (PubMed:26009488). Interacts with TMEM147; promoting LBR localization to the nucleus inner membrane (PubMed:32694168).</text>
</comment>
<comment type="interaction">
    <interactant intactId="EBI-1055147">
        <id>Q14739</id>
    </interactant>
    <interactant intactId="EBI-347528">
        <id>Q07021</id>
        <label>C1QBP</label>
    </interactant>
    <organismsDiffer>false</organismsDiffer>
    <experiments>2</experiments>
</comment>
<comment type="interaction">
    <interactant intactId="EBI-1055147">
        <id>Q14739</id>
    </interactant>
    <interactant intactId="EBI-78176">
        <id>Q13185</id>
        <label>CBX3</label>
    </interactant>
    <organismsDiffer>false</organismsDiffer>
    <experiments>4</experiments>
</comment>
<comment type="interaction">
    <interactant intactId="EBI-1055147">
        <id>Q14739</id>
    </interactant>
    <interactant intactId="EBI-78219">
        <id>P45973</id>
        <label>CBX5</label>
    </interactant>
    <organismsDiffer>false</organismsDiffer>
    <experiments>4</experiments>
</comment>
<comment type="interaction">
    <interactant intactId="EBI-1055147">
        <id>Q14739</id>
    </interactant>
    <interactant intactId="EBI-712921">
        <id>P60033</id>
        <label>CD81</label>
    </interactant>
    <organismsDiffer>false</organismsDiffer>
    <experiments>3</experiments>
</comment>
<comment type="interaction">
    <interactant intactId="EBI-1055147">
        <id>Q14739</id>
    </interactant>
    <interactant intactId="EBI-6164383">
        <id>Q8NAF0</id>
        <label>ZNF579</label>
    </interactant>
    <organismsDiffer>false</organismsDiffer>
    <experiments>2</experiments>
</comment>
<comment type="subcellular location">
    <subcellularLocation>
        <location evidence="19 20">Nucleus inner membrane</location>
        <topology evidence="3">Multi-pass membrane protein</topology>
    </subcellularLocation>
    <subcellularLocation>
        <location evidence="13">Endoplasmic reticulum membrane</location>
    </subcellularLocation>
    <subcellularLocation>
        <location evidence="13">Cytoplasm</location>
    </subcellularLocation>
    <subcellularLocation>
        <location evidence="13">Nucleus</location>
    </subcellularLocation>
    <text evidence="13">Nucleus; nuclear rim.</text>
</comment>
<comment type="tissue specificity">
    <text evidence="11 13">Expressed in the bone marrow, liver, heart, adrenal gland, lung, placenta and uterus (PubMed:16784888). Expressed in osteoclasts and osteoblast-like cells (PubMed:21327084).</text>
</comment>
<comment type="domain">
    <text evidence="1">The Tudor domain may not recognize methylation marks, but rather bind unassembled free histone H3.</text>
</comment>
<comment type="PTM">
    <text evidence="5 14">Phosphorylated by CDK1 in mitosis when the inner nuclear membrane breaks down into vesicles that dissociate from the lamina and the chromatin. It is phosphorylated by different protein kinases in interphase when the membrane is associated with these structures. Phosphorylation of LBR and HP1 proteins may be responsible for some of the alterations in chromatin organization and nuclear structure which occur at various times during the cell cycle. Phosphorylated by SRPK1. In late anaphase LBR is dephosphorylated, probably by PP1 and/or PP2A, allowing reassociation with chromatin.</text>
</comment>
<comment type="disease" evidence="8">
    <disease id="DI-02149">
        <name>Pelger-Huet anomaly</name>
        <acronym>PHA</acronym>
        <description>An autosomal dominant inherited abnormality of granulocytes, characterized by abnormal ovoid shape, reduced nuclear segmentation and an apparently looser chromatin structure.</description>
        <dbReference type="MIM" id="169400"/>
    </disease>
    <text>The disease is caused by variants affecting the gene represented in this entry.</text>
</comment>
<comment type="disease" evidence="7 13 18">
    <disease id="DI-01761">
        <name>Greenberg dysplasia</name>
        <acronym>GRBGD</acronym>
        <description>A rare autosomal recessive chondrodystrophy characterized by early in utero lethality. Affected fetuses typically present with fetal hydrops, short-limbed dwarfism, and a marked disorganization of chondro-osseous calcification, and ectopic ossification centers.</description>
        <dbReference type="MIM" id="215140"/>
    </disease>
    <text>The disease is caused by variants affecting the gene represented in this entry.</text>
</comment>
<comment type="disease" evidence="12">
    <disease id="DI-02850">
        <name>Reynolds syndrome</name>
        <acronym>REYNS</acronym>
        <description>A syndrome specifically associating limited cutaneous systemic sclerosis and primary biliary cirrhosis. It is characterized by liver disease, telangiectasia, abrupt onset of digital paleness or cyanosis in response to cold exposure or stress (Raynaud phenomenon), and variable features of scleroderma. The liver disease is characterized by pruritis, jaundice, hepatomegaly, increased serum alkaline phosphatase and positive serum mitochondrial autoantibodies, all consistent with primary biliary cirrhosis.</description>
        <dbReference type="MIM" id="613471"/>
    </disease>
    <text>The disease may be caused by variants affecting the gene represented in this entry.</text>
</comment>
<comment type="disease" evidence="15 16">
    <disease id="DI-05279">
        <name>Rhizomelic skeletal dysplasia with or without Pelger-Huet anomaly</name>
        <acronym>SKPHA</acronym>
        <description>A disease characterized by abnormal nuclear shape and chromatin organization in blood granulocytes, short stature, and mild skeletal anomalies. Initial skeletal features may improve with age.</description>
        <dbReference type="MIM" id="618019"/>
    </disease>
    <text>The disease is caused by variants affecting the gene represented in this entry.</text>
</comment>
<comment type="similarity">
    <text evidence="31">Belongs to the ERG4/ERG24 family.</text>
</comment>
<comment type="sequence caution" evidence="31">
    <conflict type="erroneous initiation">
        <sequence resource="EMBL-CDS" id="BAD92751"/>
    </conflict>
</comment>
<proteinExistence type="evidence at protein level"/>
<evidence type="ECO:0000250" key="1">
    <source>
        <dbReference type="UniProtKB" id="P23913"/>
    </source>
</evidence>
<evidence type="ECO:0000250" key="2">
    <source>
        <dbReference type="UniProtKB" id="Q3U9G9"/>
    </source>
</evidence>
<evidence type="ECO:0000255" key="3"/>
<evidence type="ECO:0000256" key="4">
    <source>
        <dbReference type="SAM" id="MobiDB-lite"/>
    </source>
</evidence>
<evidence type="ECO:0000269" key="5">
    <source>
    </source>
</evidence>
<evidence type="ECO:0000269" key="6">
    <source>
    </source>
</evidence>
<evidence type="ECO:0000269" key="7">
    <source>
    </source>
</evidence>
<evidence type="ECO:0000269" key="8">
    <source>
    </source>
</evidence>
<evidence type="ECO:0000269" key="9">
    <source>
    </source>
</evidence>
<evidence type="ECO:0000269" key="10">
    <source>
    </source>
</evidence>
<evidence type="ECO:0000269" key="11">
    <source>
    </source>
</evidence>
<evidence type="ECO:0000269" key="12">
    <source>
    </source>
</evidence>
<evidence type="ECO:0000269" key="13">
    <source>
    </source>
</evidence>
<evidence type="ECO:0000269" key="14">
    <source>
    </source>
</evidence>
<evidence type="ECO:0000269" key="15">
    <source>
    </source>
</evidence>
<evidence type="ECO:0000269" key="16">
    <source>
    </source>
</evidence>
<evidence type="ECO:0000269" key="17">
    <source>
    </source>
</evidence>
<evidence type="ECO:0000269" key="18">
    <source>
    </source>
</evidence>
<evidence type="ECO:0000269" key="19">
    <source>
    </source>
</evidence>
<evidence type="ECO:0000269" key="20">
    <source>
    </source>
</evidence>
<evidence type="ECO:0000269" key="21">
    <source>
    </source>
</evidence>
<evidence type="ECO:0000269" key="22">
    <source>
    </source>
</evidence>
<evidence type="ECO:0000269" key="23">
    <source>
    </source>
</evidence>
<evidence type="ECO:0000269" key="24">
    <source ref="4"/>
</evidence>
<evidence type="ECO:0000269" key="25">
    <source ref="5"/>
</evidence>
<evidence type="ECO:0000269" key="26">
    <source ref="6"/>
</evidence>
<evidence type="ECO:0000303" key="27">
    <source>
    </source>
</evidence>
<evidence type="ECO:0000303" key="28">
    <source>
    </source>
</evidence>
<evidence type="ECO:0000303" key="29">
    <source>
    </source>
</evidence>
<evidence type="ECO:0000303" key="30">
    <source>
    </source>
</evidence>
<evidence type="ECO:0000305" key="31"/>
<evidence type="ECO:0007744" key="32">
    <source>
    </source>
</evidence>
<evidence type="ECO:0007744" key="33">
    <source>
    </source>
</evidence>
<evidence type="ECO:0007744" key="34">
    <source>
    </source>
</evidence>
<evidence type="ECO:0007744" key="35">
    <source>
    </source>
</evidence>
<evidence type="ECO:0007744" key="36">
    <source>
    </source>
</evidence>
<evidence type="ECO:0007829" key="37">
    <source>
        <dbReference type="PDB" id="2DIG"/>
    </source>
</evidence>
<reference key="1">
    <citation type="journal article" date="1994" name="J. Biol. Chem.">
        <title>Primary structure analysis and lamin B and DNA binding of human LBR, an integral protein of the nuclear envelope inner membrane.</title>
        <authorList>
            <person name="Ye Q."/>
            <person name="Worman H.J."/>
        </authorList>
    </citation>
    <scope>NUCLEOTIDE SEQUENCE [MRNA]</scope>
    <scope>INTERACTION WITH DNA AND LAMIN B</scope>
    <scope>SUBCELLULAR LOCATION</scope>
</reference>
<reference key="2">
    <citation type="journal article" date="1994" name="J. Biol. Chem.">
        <title>Characterization of the human gene encoding LBR, an integral protein of the nuclear envelope inner membrane.</title>
        <authorList>
            <person name="Schuler E."/>
            <person name="Lin F."/>
            <person name="Worman H.J."/>
        </authorList>
    </citation>
    <scope>NUCLEOTIDE SEQUENCE [GENOMIC DNA]</scope>
    <scope>VARIANT ASN-154</scope>
</reference>
<reference key="3">
    <citation type="journal article" date="2004" name="Nat. Genet.">
        <title>Complete sequencing and characterization of 21,243 full-length human cDNAs.</title>
        <authorList>
            <person name="Ota T."/>
            <person name="Suzuki Y."/>
            <person name="Nishikawa T."/>
            <person name="Otsuki T."/>
            <person name="Sugiyama T."/>
            <person name="Irie R."/>
            <person name="Wakamatsu A."/>
            <person name="Hayashi K."/>
            <person name="Sato H."/>
            <person name="Nagai K."/>
            <person name="Kimura K."/>
            <person name="Makita H."/>
            <person name="Sekine M."/>
            <person name="Obayashi M."/>
            <person name="Nishi T."/>
            <person name="Shibahara T."/>
            <person name="Tanaka T."/>
            <person name="Ishii S."/>
            <person name="Yamamoto J."/>
            <person name="Saito K."/>
            <person name="Kawai Y."/>
            <person name="Isono Y."/>
            <person name="Nakamura Y."/>
            <person name="Nagahari K."/>
            <person name="Murakami K."/>
            <person name="Yasuda T."/>
            <person name="Iwayanagi T."/>
            <person name="Wagatsuma M."/>
            <person name="Shiratori A."/>
            <person name="Sudo H."/>
            <person name="Hosoiri T."/>
            <person name="Kaku Y."/>
            <person name="Kodaira H."/>
            <person name="Kondo H."/>
            <person name="Sugawara M."/>
            <person name="Takahashi M."/>
            <person name="Kanda K."/>
            <person name="Yokoi T."/>
            <person name="Furuya T."/>
            <person name="Kikkawa E."/>
            <person name="Omura Y."/>
            <person name="Abe K."/>
            <person name="Kamihara K."/>
            <person name="Katsuta N."/>
            <person name="Sato K."/>
            <person name="Tanikawa M."/>
            <person name="Yamazaki M."/>
            <person name="Ninomiya K."/>
            <person name="Ishibashi T."/>
            <person name="Yamashita H."/>
            <person name="Murakawa K."/>
            <person name="Fujimori K."/>
            <person name="Tanai H."/>
            <person name="Kimata M."/>
            <person name="Watanabe M."/>
            <person name="Hiraoka S."/>
            <person name="Chiba Y."/>
            <person name="Ishida S."/>
            <person name="Ono Y."/>
            <person name="Takiguchi S."/>
            <person name="Watanabe S."/>
            <person name="Yosida M."/>
            <person name="Hotuta T."/>
            <person name="Kusano J."/>
            <person name="Kanehori K."/>
            <person name="Takahashi-Fujii A."/>
            <person name="Hara H."/>
            <person name="Tanase T.-O."/>
            <person name="Nomura Y."/>
            <person name="Togiya S."/>
            <person name="Komai F."/>
            <person name="Hara R."/>
            <person name="Takeuchi K."/>
            <person name="Arita M."/>
            <person name="Imose N."/>
            <person name="Musashino K."/>
            <person name="Yuuki H."/>
            <person name="Oshima A."/>
            <person name="Sasaki N."/>
            <person name="Aotsuka S."/>
            <person name="Yoshikawa Y."/>
            <person name="Matsunawa H."/>
            <person name="Ichihara T."/>
            <person name="Shiohata N."/>
            <person name="Sano S."/>
            <person name="Moriya S."/>
            <person name="Momiyama H."/>
            <person name="Satoh N."/>
            <person name="Takami S."/>
            <person name="Terashima Y."/>
            <person name="Suzuki O."/>
            <person name="Nakagawa S."/>
            <person name="Senoh A."/>
            <person name="Mizoguchi H."/>
            <person name="Goto Y."/>
            <person name="Shimizu F."/>
            <person name="Wakebe H."/>
            <person name="Hishigaki H."/>
            <person name="Watanabe T."/>
            <person name="Sugiyama A."/>
            <person name="Takemoto M."/>
            <person name="Kawakami B."/>
            <person name="Yamazaki M."/>
            <person name="Watanabe K."/>
            <person name="Kumagai A."/>
            <person name="Itakura S."/>
            <person name="Fukuzumi Y."/>
            <person name="Fujimori Y."/>
            <person name="Komiyama M."/>
            <person name="Tashiro H."/>
            <person name="Tanigami A."/>
            <person name="Fujiwara T."/>
            <person name="Ono T."/>
            <person name="Yamada K."/>
            <person name="Fujii Y."/>
            <person name="Ozaki K."/>
            <person name="Hirao M."/>
            <person name="Ohmori Y."/>
            <person name="Kawabata A."/>
            <person name="Hikiji T."/>
            <person name="Kobatake N."/>
            <person name="Inagaki H."/>
            <person name="Ikema Y."/>
            <person name="Okamoto S."/>
            <person name="Okitani R."/>
            <person name="Kawakami T."/>
            <person name="Noguchi S."/>
            <person name="Itoh T."/>
            <person name="Shigeta K."/>
            <person name="Senba T."/>
            <person name="Matsumura K."/>
            <person name="Nakajima Y."/>
            <person name="Mizuno T."/>
            <person name="Morinaga M."/>
            <person name="Sasaki M."/>
            <person name="Togashi T."/>
            <person name="Oyama M."/>
            <person name="Hata H."/>
            <person name="Watanabe M."/>
            <person name="Komatsu T."/>
            <person name="Mizushima-Sugano J."/>
            <person name="Satoh T."/>
            <person name="Shirai Y."/>
            <person name="Takahashi Y."/>
            <person name="Nakagawa K."/>
            <person name="Okumura K."/>
            <person name="Nagase T."/>
            <person name="Nomura N."/>
            <person name="Kikuchi H."/>
            <person name="Masuho Y."/>
            <person name="Yamashita R."/>
            <person name="Nakai K."/>
            <person name="Yada T."/>
            <person name="Nakamura Y."/>
            <person name="Ohara O."/>
            <person name="Isogai T."/>
            <person name="Sugano S."/>
        </authorList>
    </citation>
    <scope>NUCLEOTIDE SEQUENCE [LARGE SCALE MRNA]</scope>
    <scope>VARIANT ASN-154</scope>
</reference>
<reference key="4">
    <citation type="submission" date="2005-03" db="EMBL/GenBank/DDBJ databases">
        <authorList>
            <person name="Totoki Y."/>
            <person name="Toyoda A."/>
            <person name="Takeda T."/>
            <person name="Sakaki Y."/>
            <person name="Tanaka A."/>
            <person name="Yokoyama S."/>
            <person name="Ohara O."/>
            <person name="Nagase T."/>
            <person name="Kikuno R.F."/>
        </authorList>
    </citation>
    <scope>NUCLEOTIDE SEQUENCE [LARGE SCALE MRNA]</scope>
    <scope>VARIANT ASN-154</scope>
    <source>
        <tissue>Brain</tissue>
    </source>
</reference>
<reference key="5">
    <citation type="submission" date="2005-04" db="EMBL/GenBank/DDBJ databases">
        <authorList>
            <person name="Suzuki Y."/>
            <person name="Sugano S."/>
            <person name="Totoki Y."/>
            <person name="Toyoda A."/>
            <person name="Takeda T."/>
            <person name="Sakaki Y."/>
            <person name="Tanaka A."/>
            <person name="Yokoyama S."/>
        </authorList>
    </citation>
    <scope>NUCLEOTIDE SEQUENCE [LARGE SCALE MRNA]</scope>
    <scope>VARIANT ASN-154</scope>
    <source>
        <tissue>Liver</tissue>
    </source>
</reference>
<reference key="6">
    <citation type="submission" date="2005-07" db="EMBL/GenBank/DDBJ databases">
        <authorList>
            <person name="Mural R.J."/>
            <person name="Istrail S."/>
            <person name="Sutton G.G."/>
            <person name="Florea L."/>
            <person name="Halpern A.L."/>
            <person name="Mobarry C.M."/>
            <person name="Lippert R."/>
            <person name="Walenz B."/>
            <person name="Shatkay H."/>
            <person name="Dew I."/>
            <person name="Miller J.R."/>
            <person name="Flanigan M.J."/>
            <person name="Edwards N.J."/>
            <person name="Bolanos R."/>
            <person name="Fasulo D."/>
            <person name="Halldorsson B.V."/>
            <person name="Hannenhalli S."/>
            <person name="Turner R."/>
            <person name="Yooseph S."/>
            <person name="Lu F."/>
            <person name="Nusskern D.R."/>
            <person name="Shue B.C."/>
            <person name="Zheng X.H."/>
            <person name="Zhong F."/>
            <person name="Delcher A.L."/>
            <person name="Huson D.H."/>
            <person name="Kravitz S.A."/>
            <person name="Mouchard L."/>
            <person name="Reinert K."/>
            <person name="Remington K.A."/>
            <person name="Clark A.G."/>
            <person name="Waterman M.S."/>
            <person name="Eichler E.E."/>
            <person name="Adams M.D."/>
            <person name="Hunkapiller M.W."/>
            <person name="Myers E.W."/>
            <person name="Venter J.C."/>
        </authorList>
    </citation>
    <scope>NUCLEOTIDE SEQUENCE [LARGE SCALE GENOMIC DNA]</scope>
    <scope>VARIANT ASN-154</scope>
</reference>
<reference key="7">
    <citation type="journal article" date="2004" name="Genome Res.">
        <title>The status, quality, and expansion of the NIH full-length cDNA project: the Mammalian Gene Collection (MGC).</title>
        <authorList>
            <consortium name="The MGC Project Team"/>
        </authorList>
    </citation>
    <scope>NUCLEOTIDE SEQUENCE [LARGE SCALE MRNA]</scope>
    <source>
        <tissue>Skin</tissue>
    </source>
</reference>
<reference key="8">
    <citation type="journal article" date="1997" name="J. Biol. Chem.">
        <title>Domain-specific interactions of human HP1-type chromodomain proteins and inner nuclear membrane protein LBR.</title>
        <authorList>
            <person name="Ye Q."/>
            <person name="Callebaut I."/>
            <person name="Pezhman A."/>
            <person name="Courvalin J.-C."/>
            <person name="Worman H.J."/>
        </authorList>
    </citation>
    <scope>INTERACTION WITH CBX5</scope>
</reference>
<reference key="9">
    <citation type="journal article" date="1998" name="Biochim. Biophys. Acta">
        <title>Human lamin B receptor exhibits sterol C14-reductase activity in Saccharomyces cerevisiae.</title>
        <authorList>
            <person name="Silve S."/>
            <person name="Dupuy P.H."/>
            <person name="Ferrara P."/>
            <person name="Loison G."/>
        </authorList>
    </citation>
    <scope>FUNCTION</scope>
    <scope>CATALYTIC ACTIVITY</scope>
</reference>
<reference key="10">
    <citation type="journal article" date="1999" name="Biochem. Biophys. Res. Commun.">
        <title>SRPK1 and LBR protein kinases show identical substrate specificities.</title>
        <authorList>
            <person name="Papoutsopoulou S."/>
            <person name="Nikolakaki E."/>
            <person name="Giannakouros T."/>
        </authorList>
    </citation>
    <scope>PHOSPHORYLATION BY SRPK1</scope>
</reference>
<reference key="11">
    <citation type="journal article" date="2000" name="Biochemistry">
        <title>Inner nuclear membrane protein LBR preferentially interacts with DNA secondary structures and nucleosomal linker.</title>
        <authorList>
            <person name="Duband-Goulet I."/>
            <person name="Courvalin J.-C."/>
        </authorList>
    </citation>
    <scope>FUNCTION</scope>
</reference>
<reference key="12">
    <citation type="journal article" date="2002" name="Nat. Genet.">
        <title>Mutations in the gene encoding the lamin B receptor produce an altered nuclear morphology in granulocytes (Pelger-Huet anomaly).</title>
        <authorList>
            <person name="Hoffmann K."/>
            <person name="Dreger C.K."/>
            <person name="Olins A.L."/>
            <person name="Olins D.E."/>
            <person name="Shultz L.D."/>
            <person name="Lucke B."/>
            <person name="Karl H."/>
            <person name="Kaps R."/>
            <person name="Mueller D."/>
            <person name="Vaya A."/>
            <person name="Aznar J."/>
            <person name="Ware R.E."/>
            <person name="Sotelo Cruz N."/>
            <person name="Lindner T.H."/>
            <person name="Herrmann H."/>
            <person name="Reis A."/>
            <person name="Sperling K."/>
        </authorList>
    </citation>
    <scope>DISEASE</scope>
</reference>
<reference key="13">
    <citation type="journal article" date="2003" name="Am. J. Hum. Genet.">
        <title>Autosomal recessive HEM/Greenberg skeletal dysplasia is caused by 3 beta-hydroxysterol delta 14-reductase deficiency due to mutations in the lamin B receptor gene.</title>
        <authorList>
            <person name="Waterham H.R."/>
            <person name="Koster J."/>
            <person name="Mooyer P."/>
            <person name="van Noort G."/>
            <person name="Kelley R.I."/>
            <person name="Wilcox W.R."/>
            <person name="Wanders R.J."/>
            <person name="Hennekam R.C.M."/>
            <person name="Oosterwijk J.C."/>
        </authorList>
    </citation>
    <scope>INVOLVEMENT IN GRBGD</scope>
    <scope>FUNCTION</scope>
    <scope>CATALYTIC ACTIVITY</scope>
</reference>
<reference key="14">
    <citation type="journal article" date="2005" name="Biochem. Biophys. Res. Commun.">
        <title>The mammalian heterochromatin protein 1 binds diverse nuclear proteins through a common motif that targets the chromoshadow domain.</title>
        <authorList>
            <person name="Lechner M.S."/>
            <person name="Schultz D.C."/>
            <person name="Negorev D."/>
            <person name="Maul G.G."/>
            <person name="Rauscher F.J. III"/>
        </authorList>
    </citation>
    <scope>INTERACTION WITH CBX5</scope>
</reference>
<reference key="15">
    <citation type="journal article" date="2006" name="Biochim. Biophys. Acta">
        <title>Sterol dependent regulation of human TM7SF2 gene expression: role of the encoded 3beta-hydroxysterol Delta14-reductase in human cholesterol biosynthesis.</title>
        <authorList>
            <person name="Bennati A.M."/>
            <person name="Castelli M."/>
            <person name="Della Fazia M.A."/>
            <person name="Beccari T."/>
            <person name="Caruso D."/>
            <person name="Servillo G."/>
            <person name="Roberti R."/>
        </authorList>
    </citation>
    <scope>FUNCTION</scope>
    <scope>CATALYTIC ACTIVITY</scope>
    <scope>TISSUE SPECIFICITY</scope>
</reference>
<reference key="16">
    <citation type="journal article" date="2006" name="Cell">
        <title>Global, in vivo, and site-specific phosphorylation dynamics in signaling networks.</title>
        <authorList>
            <person name="Olsen J.V."/>
            <person name="Blagoev B."/>
            <person name="Gnad F."/>
            <person name="Macek B."/>
            <person name="Kumar C."/>
            <person name="Mortensen P."/>
            <person name="Mann M."/>
        </authorList>
    </citation>
    <scope>IDENTIFICATION BY MASS SPECTROMETRY [LARGE SCALE ANALYSIS]</scope>
    <source>
        <tissue>Cervix carcinoma</tissue>
    </source>
</reference>
<reference key="17">
    <citation type="journal article" date="2008" name="Proc. Natl. Acad. Sci. U.S.A.">
        <title>A quantitative atlas of mitotic phosphorylation.</title>
        <authorList>
            <person name="Dephoure N."/>
            <person name="Zhou C."/>
            <person name="Villen J."/>
            <person name="Beausoleil S.A."/>
            <person name="Bakalarski C.E."/>
            <person name="Elledge S.J."/>
            <person name="Gygi S.P."/>
        </authorList>
    </citation>
    <scope>PHOSPHORYLATION [LARGE SCALE ANALYSIS] AT THR-118</scope>
    <scope>IDENTIFICATION BY MASS SPECTROMETRY [LARGE SCALE ANALYSIS]</scope>
    <source>
        <tissue>Cervix carcinoma</tissue>
    </source>
</reference>
<reference key="18">
    <citation type="journal article" date="2009" name="Science">
        <title>Lysine acetylation targets protein complexes and co-regulates major cellular functions.</title>
        <authorList>
            <person name="Choudhary C."/>
            <person name="Kumar C."/>
            <person name="Gnad F."/>
            <person name="Nielsen M.L."/>
            <person name="Rehman M."/>
            <person name="Walther T.C."/>
            <person name="Olsen J.V."/>
            <person name="Mann M."/>
        </authorList>
    </citation>
    <scope>ACETYLATION [LARGE SCALE ANALYSIS] AT LYS-55; LYS-594 AND LYS-601</scope>
    <scope>IDENTIFICATION BY MASS SPECTROMETRY [LARGE SCALE ANALYSIS]</scope>
</reference>
<reference key="19">
    <citation type="journal article" date="2010" name="Sci. Signal.">
        <title>Quantitative phosphoproteomics reveals widespread full phosphorylation site occupancy during mitosis.</title>
        <authorList>
            <person name="Olsen J.V."/>
            <person name="Vermeulen M."/>
            <person name="Santamaria A."/>
            <person name="Kumar C."/>
            <person name="Miller M.L."/>
            <person name="Jensen L.J."/>
            <person name="Gnad F."/>
            <person name="Cox J."/>
            <person name="Jensen T.S."/>
            <person name="Nigg E.A."/>
            <person name="Brunak S."/>
            <person name="Mann M."/>
        </authorList>
    </citation>
    <scope>PHOSPHORYLATION [LARGE SCALE ANALYSIS] AT SER-97 AND THR-118</scope>
    <scope>IDENTIFICATION BY MASS SPECTROMETRY [LARGE SCALE ANALYSIS]</scope>
    <source>
        <tissue>Cervix carcinoma</tissue>
    </source>
</reference>
<reference key="20">
    <citation type="journal article" date="2011" name="BMC Syst. Biol.">
        <title>Initial characterization of the human central proteome.</title>
        <authorList>
            <person name="Burkard T.R."/>
            <person name="Planyavsky M."/>
            <person name="Kaupe I."/>
            <person name="Breitwieser F.P."/>
            <person name="Buerckstuemmer T."/>
            <person name="Bennett K.L."/>
            <person name="Superti-Furga G."/>
            <person name="Colinge J."/>
        </authorList>
    </citation>
    <scope>IDENTIFICATION BY MASS SPECTROMETRY [LARGE SCALE ANALYSIS]</scope>
</reference>
<reference key="21">
    <citation type="journal article" date="2011" name="Mol. Biol. Cell">
        <title>Temporal control of nuclear envelope assembly by phosphorylation of lamin B receptor.</title>
        <authorList>
            <person name="Tseng L.C."/>
            <person name="Chen R.H."/>
        </authorList>
    </citation>
    <scope>PHOSPHORYLATION AT SER-71 AND SER-86 BY CDK1</scope>
</reference>
<reference key="22">
    <citation type="journal article" date="2011" name="Sci. Signal.">
        <title>System-wide temporal characterization of the proteome and phosphoproteome of human embryonic stem cell differentiation.</title>
        <authorList>
            <person name="Rigbolt K.T."/>
            <person name="Prokhorova T.A."/>
            <person name="Akimov V."/>
            <person name="Henningsen J."/>
            <person name="Johansen P.T."/>
            <person name="Kratchmarova I."/>
            <person name="Kassem M."/>
            <person name="Mann M."/>
            <person name="Olsen J.V."/>
            <person name="Blagoev B."/>
        </authorList>
    </citation>
    <scope>PHOSPHORYLATION [LARGE SCALE ANALYSIS] AT SER-99</scope>
    <scope>IDENTIFICATION BY MASS SPECTROMETRY [LARGE SCALE ANALYSIS]</scope>
</reference>
<reference key="23">
    <citation type="journal article" date="2013" name="J. Proteome Res.">
        <title>Toward a comprehensive characterization of a human cancer cell phosphoproteome.</title>
        <authorList>
            <person name="Zhou H."/>
            <person name="Di Palma S."/>
            <person name="Preisinger C."/>
            <person name="Peng M."/>
            <person name="Polat A.N."/>
            <person name="Heck A.J."/>
            <person name="Mohammed S."/>
        </authorList>
    </citation>
    <scope>PHOSPHORYLATION [LARGE SCALE ANALYSIS] AT THR-58; SER-59; SER-128 AND THR-200</scope>
    <scope>IDENTIFICATION BY MASS SPECTROMETRY [LARGE SCALE ANALYSIS]</scope>
    <source>
        <tissue>Cervix carcinoma</tissue>
        <tissue>Erythroleukemia</tissue>
    </source>
</reference>
<reference key="24">
    <citation type="journal article" date="2014" name="J. Proteomics">
        <title>An enzyme assisted RP-RPLC approach for in-depth analysis of human liver phosphoproteome.</title>
        <authorList>
            <person name="Bian Y."/>
            <person name="Song C."/>
            <person name="Cheng K."/>
            <person name="Dong M."/>
            <person name="Wang F."/>
            <person name="Huang J."/>
            <person name="Sun D."/>
            <person name="Wang L."/>
            <person name="Ye M."/>
            <person name="Zou H."/>
        </authorList>
    </citation>
    <scope>IDENTIFICATION BY MASS SPECTROMETRY [LARGE SCALE ANALYSIS]</scope>
    <source>
        <tissue>Liver</tissue>
    </source>
</reference>
<reference key="25">
    <citation type="journal article" date="2015" name="Biochem. Biophys. Res. Commun.">
        <title>Clnk plays a role in TNF-alpha-induced cell death in murine fibrosarcoma cell line L929.</title>
        <authorList>
            <person name="Xu M."/>
            <person name="Cai C."/>
            <person name="Sun X."/>
            <person name="Chen W."/>
            <person name="Li Q."/>
            <person name="Zhou H."/>
        </authorList>
    </citation>
    <scope>INTERACTION WITH CLNK</scope>
</reference>
<reference key="26">
    <citation type="journal article" date="2015" name="Proteomics">
        <title>N-terminome analysis of the human mitochondrial proteome.</title>
        <authorList>
            <person name="Vaca Jacome A.S."/>
            <person name="Rabilloud T."/>
            <person name="Schaeffer-Reiss C."/>
            <person name="Rompais M."/>
            <person name="Ayoub D."/>
            <person name="Lane L."/>
            <person name="Bairoch A."/>
            <person name="Van Dorsselaer A."/>
            <person name="Carapito C."/>
        </authorList>
    </citation>
    <scope>IDENTIFICATION BY MASS SPECTROMETRY [LARGE SCALE ANALYSIS]</scope>
</reference>
<reference key="27">
    <citation type="journal article" date="2020" name="J. Cell Sci.">
        <title>TMEM147 interacts with lamin B receptor, regulates its localization and levels, and affects cholesterol homeostasis.</title>
        <authorList>
            <person name="Christodoulou A."/>
            <person name="Maimaris G."/>
            <person name="Makrigiorgi A."/>
            <person name="Charidemou E."/>
            <person name="Luechtenborg C."/>
            <person name="Ververis A."/>
            <person name="Georgiou R."/>
            <person name="Lederer C.W."/>
            <person name="Haffner C."/>
            <person name="Bruegger B."/>
            <person name="Santama N."/>
        </authorList>
    </citation>
    <scope>SUBCELLULAR LOCATION</scope>
    <scope>INTERACTION WITH TMEM147</scope>
</reference>
<reference key="28">
    <citation type="submission" date="2006-09" db="PDB data bank">
        <title>Solution structure of the Tudor domain of human lamin-B receptor.</title>
        <authorList>
            <consortium name="RIKEN structural genomics initiative (RSGI)"/>
        </authorList>
    </citation>
    <scope>STRUCTURE BY NMR OF 1-55</scope>
</reference>
<reference key="29">
    <citation type="submission" date="2009-02" db="PDB data bank">
        <title>Solution structure of the Tudor domain of human lamin-B receptor.</title>
        <authorList>
            <consortium name="RIKEN structural genomics initiative (RSGI)"/>
        </authorList>
    </citation>
    <scope>STRUCTURE BY NMR OF 1-55</scope>
</reference>
<reference key="30">
    <citation type="journal article" date="2003" name="Br. J. Haematol.">
        <title>Lamin B-receptor mutations in Pelger-Huet anomaly.</title>
        <authorList>
            <person name="Best S."/>
            <person name="Salvati F."/>
            <person name="Kallo J."/>
            <person name="Garner C."/>
            <person name="Height S."/>
            <person name="Thein S.L."/>
            <person name="Rees D.C."/>
        </authorList>
    </citation>
    <scope>VARIANTS PHA LEU-119 AND ARG-569</scope>
</reference>
<reference key="31">
    <citation type="journal article" date="2010" name="J. Med. Genet.">
        <title>LBR mutation and nuclear envelope defects in a patient affected with Reynolds syndrome.</title>
        <authorList>
            <person name="Gaudy-Marqueste C."/>
            <person name="Roll P."/>
            <person name="Esteves-Vieira V."/>
            <person name="Weiller P.J."/>
            <person name="Grob J.J."/>
            <person name="Cau P."/>
            <person name="Levy N."/>
            <person name="De Sandre-Giovannoli A."/>
        </authorList>
    </citation>
    <scope>VARIANT REYNS CYS-372</scope>
</reference>
<reference key="32">
    <citation type="journal article" date="2010" name="Nucleus">
        <title>Mutations causing Greenberg dysplasia but not Pelger anomaly uncouple enzymatic from structural functions of a nuclear membrane protein.</title>
        <authorList>
            <person name="Clayton P."/>
            <person name="Fischer B."/>
            <person name="Mann A."/>
            <person name="Mansour S."/>
            <person name="Rossier E."/>
            <person name="Veen M."/>
            <person name="Lang C."/>
            <person name="Baasanjav S."/>
            <person name="Kieslich M."/>
            <person name="Brossuleit K."/>
            <person name="Gravemann S."/>
            <person name="Schnipper N."/>
            <person name="Karbasyian M."/>
            <person name="Demuth I."/>
            <person name="Zwerger M."/>
            <person name="Vaya A."/>
            <person name="Utermann G."/>
            <person name="Mundlos S."/>
            <person name="Stricker S."/>
            <person name="Sperling K."/>
            <person name="Hoffmann K."/>
        </authorList>
    </citation>
    <scope>VARIANTS GRBGD ASP-547 AND GLN-583</scope>
    <scope>CHARACTERIZATION OF VARIANTS GRBGD ASP-547 AND GLN-583</scope>
    <scope>FUNCTION</scope>
    <scope>SUBCELLULAR LOCATION</scope>
    <scope>TISSUE SPECIFICITY</scope>
</reference>
<reference key="33">
    <citation type="journal article" date="2013" name="Am. J. Med. Genet. A">
        <title>Pelger-huet anomaly and a mild skeletal phenotype secondary to mutations in LBR.</title>
        <authorList>
            <person name="Borovik L."/>
            <person name="Modaff P."/>
            <person name="Waterham H.R."/>
            <person name="Krentz A.D."/>
            <person name="Pauli R.M."/>
        </authorList>
    </citation>
    <scope>INVOLVEMENT IN SKPHA</scope>
    <scope>VARIANT SKPHA HIS-586</scope>
</reference>
<reference key="34">
    <citation type="journal article" date="2015" name="Am. J. Med. Genet. A">
        <title>An anadysplasia-like, spontaneously remitting spondylometaphyseal dysplasia secondary to lamin B receptor (LBR) gene mutations: further definition of the phenotypic heterogeneity of LBR-bone dysplasias.</title>
        <authorList>
            <person name="Sobreira N."/>
            <person name="Modaff P."/>
            <person name="Steel G."/>
            <person name="You J."/>
            <person name="Nanda S."/>
            <person name="Hoover-Fong J."/>
            <person name="Valle D."/>
            <person name="Pauli R.M."/>
        </authorList>
    </citation>
    <scope>INVOLVEMENT IN SKPHA</scope>
    <scope>VARIANTS SKPHA SER-547 AND 76-ARG--TYR-615 DEL</scope>
</reference>
<reference key="35">
    <citation type="journal article" date="2016" name="Elife">
        <title>The Lamin B receptor is essential for cholesterol synthesis and perturbed by disease-causing mutations.</title>
        <authorList>
            <person name="Tsai P.L."/>
            <person name="Zhao C."/>
            <person name="Turner E."/>
            <person name="Schlieker C."/>
        </authorList>
    </citation>
    <scope>CHARACTERIZATION OF VARIANTS GRBGD ASP-547 AND GLN-583</scope>
    <scope>FUNCTION</scope>
</reference>
<organism>
    <name type="scientific">Homo sapiens</name>
    <name type="common">Human</name>
    <dbReference type="NCBI Taxonomy" id="9606"/>
    <lineage>
        <taxon>Eukaryota</taxon>
        <taxon>Metazoa</taxon>
        <taxon>Chordata</taxon>
        <taxon>Craniata</taxon>
        <taxon>Vertebrata</taxon>
        <taxon>Euteleostomi</taxon>
        <taxon>Mammalia</taxon>
        <taxon>Eutheria</taxon>
        <taxon>Euarchontoglires</taxon>
        <taxon>Primates</taxon>
        <taxon>Haplorrhini</taxon>
        <taxon>Catarrhini</taxon>
        <taxon>Hominidae</taxon>
        <taxon>Homo</taxon>
    </lineage>
</organism>
<gene>
    <name type="primary">LBR</name>
</gene>
<name>LBR_HUMAN</name>
<feature type="chain" id="PRO_0000207510" description="Delta(14)-sterol reductase LBR">
    <location>
        <begin position="1"/>
        <end position="615"/>
    </location>
</feature>
<feature type="topological domain" description="Nuclear" evidence="3">
    <location>
        <begin position="1"/>
        <end position="211"/>
    </location>
</feature>
<feature type="transmembrane region" description="Helical" evidence="3">
    <location>
        <begin position="212"/>
        <end position="232"/>
    </location>
</feature>
<feature type="transmembrane region" description="Helical" evidence="3">
    <location>
        <begin position="258"/>
        <end position="278"/>
    </location>
</feature>
<feature type="transmembrane region" description="Helical" evidence="3">
    <location>
        <begin position="299"/>
        <end position="319"/>
    </location>
</feature>
<feature type="transmembrane region" description="Helical" evidence="3">
    <location>
        <begin position="326"/>
        <end position="346"/>
    </location>
</feature>
<feature type="transmembrane region" description="Helical" evidence="3">
    <location>
        <begin position="386"/>
        <end position="406"/>
    </location>
</feature>
<feature type="transmembrane region" description="Helical" evidence="3">
    <location>
        <begin position="447"/>
        <end position="467"/>
    </location>
</feature>
<feature type="transmembrane region" description="Helical" evidence="3">
    <location>
        <begin position="481"/>
        <end position="501"/>
    </location>
</feature>
<feature type="transmembrane region" description="Helical" evidence="3">
    <location>
        <begin position="561"/>
        <end position="581"/>
    </location>
</feature>
<feature type="domain" description="Tudor">
    <location>
        <begin position="1"/>
        <end position="62"/>
    </location>
</feature>
<feature type="region of interest" description="Disordered" evidence="4">
    <location>
        <begin position="52"/>
        <end position="109"/>
    </location>
</feature>
<feature type="compositionally biased region" description="Basic residues" evidence="4">
    <location>
        <begin position="73"/>
        <end position="86"/>
    </location>
</feature>
<feature type="modified residue" description="N6-acetyllysine" evidence="33">
    <location>
        <position position="55"/>
    </location>
</feature>
<feature type="modified residue" description="Phosphothreonine" evidence="36">
    <location>
        <position position="58"/>
    </location>
</feature>
<feature type="modified residue" description="Phosphoserine" evidence="36">
    <location>
        <position position="59"/>
    </location>
</feature>
<feature type="modified residue" description="Phosphoserine" evidence="2">
    <location>
        <position position="67"/>
    </location>
</feature>
<feature type="modified residue" description="Phosphoserine; by CDK1" evidence="14">
    <location>
        <position position="71"/>
    </location>
</feature>
<feature type="modified residue" description="Phosphoserine; by CDK1" evidence="14">
    <location>
        <position position="86"/>
    </location>
</feature>
<feature type="modified residue" description="Phosphoserine" evidence="34">
    <location>
        <position position="97"/>
    </location>
</feature>
<feature type="modified residue" description="Phosphoserine" evidence="35">
    <location>
        <position position="99"/>
    </location>
</feature>
<feature type="modified residue" description="Phosphothreonine" evidence="32 34">
    <location>
        <position position="118"/>
    </location>
</feature>
<feature type="modified residue" description="Phosphoserine" evidence="36">
    <location>
        <position position="128"/>
    </location>
</feature>
<feature type="modified residue" description="Phosphothreonine" evidence="36">
    <location>
        <position position="200"/>
    </location>
</feature>
<feature type="modified residue" description="N6-acetyllysine" evidence="33">
    <location>
        <position position="594"/>
    </location>
</feature>
<feature type="modified residue" description="N6-acetyllysine" evidence="33">
    <location>
        <position position="601"/>
    </location>
</feature>
<feature type="sequence variant" id="VAR_081005" description="In SKPHA; dbSNP:rs869312905." evidence="16">
    <location>
        <begin position="76"/>
        <end position="615"/>
    </location>
</feature>
<feature type="sequence variant" id="VAR_017841" description="In PHA; dbSNP:rs137852605." evidence="8">
    <original>P</original>
    <variation>L</variation>
    <location>
        <position position="119"/>
    </location>
</feature>
<feature type="sequence variant" id="VAR_024318" description="In dbSNP:rs2230419." evidence="9 21 24 25 26">
    <original>S</original>
    <variation>N</variation>
    <location>
        <position position="154"/>
    </location>
</feature>
<feature type="sequence variant" id="VAR_052155" description="In dbSNP:rs2230420.">
    <original>R</original>
    <variation>C</variation>
    <location>
        <position position="169"/>
    </location>
</feature>
<feature type="sequence variant" id="VAR_020209" description="In dbSNP:rs2275601.">
    <original>T</original>
    <variation>A</variation>
    <location>
        <position position="311"/>
    </location>
</feature>
<feature type="sequence variant" id="VAR_063811" description="In REYNS; dbSNP:rs200180113." evidence="12">
    <original>R</original>
    <variation>C</variation>
    <location>
        <position position="372"/>
    </location>
</feature>
<feature type="sequence variant" id="VAR_081220" description="In GRBGD; significant reduction in affinity for NADPH; loss of cholesterol biosynthesis; does not affect protein stability; dbSNP:rs587777171." evidence="13 18">
    <original>N</original>
    <variation>D</variation>
    <location>
        <position position="547"/>
    </location>
</feature>
<feature type="sequence variant" id="VAR_081006" description="In SKPHA; uncertain significance; dbSNP:rs374343844." evidence="16">
    <original>N</original>
    <variation>S</variation>
    <location>
        <position position="547"/>
    </location>
</feature>
<feature type="sequence variant" id="VAR_017842" description="In PHA; dbSNP:rs137852606." evidence="8">
    <original>P</original>
    <variation>R</variation>
    <location>
        <position position="569"/>
    </location>
</feature>
<feature type="sequence variant" id="VAR_081221" description="In GRBGD; significant reduction in affinity for NADPH; loss of cholesterol biosynthesis; does not affect protein stability; dbSNP:rs587777172." evidence="13 18">
    <original>R</original>
    <variation>Q</variation>
    <location>
        <position position="583"/>
    </location>
</feature>
<feature type="sequence variant" id="VAR_081007" description="In SKPHA; uncertain significance; dbSNP:rs573510559." evidence="15">
    <original>R</original>
    <variation>H</variation>
    <location>
        <position position="586"/>
    </location>
</feature>
<feature type="sequence conflict" description="In Ref. 1; AAA59494." evidence="31" ref="1">
    <original>A</original>
    <variation>P</variation>
    <location>
        <position position="301"/>
    </location>
</feature>
<feature type="sequence conflict" description="In Ref. 5; BAD96554." evidence="31" ref="5">
    <original>F</original>
    <variation>L</variation>
    <location>
        <position position="452"/>
    </location>
</feature>
<feature type="sequence conflict" description="In Ref. 1; AAA59494." evidence="31" ref="1">
    <original>T</original>
    <variation>S</variation>
    <location>
        <position position="530"/>
    </location>
</feature>
<feature type="strand" evidence="37">
    <location>
        <begin position="11"/>
        <end position="15"/>
    </location>
</feature>
<feature type="turn" evidence="37">
    <location>
        <begin position="17"/>
        <end position="19"/>
    </location>
</feature>
<feature type="strand" evidence="37">
    <location>
        <begin position="22"/>
        <end position="31"/>
    </location>
</feature>
<feature type="turn" evidence="37">
    <location>
        <begin position="32"/>
        <end position="35"/>
    </location>
</feature>
<feature type="strand" evidence="37">
    <location>
        <begin position="36"/>
        <end position="40"/>
    </location>
</feature>
<feature type="strand" evidence="37">
    <location>
        <begin position="46"/>
        <end position="50"/>
    </location>
</feature>
<feature type="turn" evidence="37">
    <location>
        <begin position="51"/>
        <end position="53"/>
    </location>
</feature>
<sequence length="615" mass="70703">MPSRKFADGEVVRGRWPGSSLYYEVEILSHDSTSQLYTVKYKDGTELELKENDIKPLTSFRQRKGGSTSSSPSRRRGSRSRSRSRSPGRPPKSARRSASASHQADIKEARREVEVKLTPLILKPFGNSISRYNGEPEHIERNDAPHKNTQEKFSLSQESSYIATQYSLRPRREEVKLKEIDSKEEKYVAKELAVRTFEVTPIRAKDLEFGGVPGVFLIMFGLPVFLFLLLLMCKQKDPSLLNFPPPLPALYELWETRVFGVYLLWFLIQVLFYLLPIGKVVEGTPLIDGRRLKYRLNGFYAFILTSAVIGTSLFQGVEFHYVYSHFLQFALAATVFCVVLSVYLYMRSLKAPRNDLSPASSGNAVYDFFIGRELNPRIGTFDLKYFCELRPGLIGWVVINLVMLLAEMKIQDRAVPSLAMILVNSFQLLYVVDALWNEEALLTTMDIIHDGFGFMLAFGDLVWVPFIYSFQAFYLVSHPNEVSWPMASLIIVLKLCGYVIFRGANSQKNAFRKNPSDPKLAHLKTIHTSTGKNLLVSGWWGFVRHPNYLGDLIMALAWSLPCGFNHILPYFYIIYFTMLLVHREARDEYHCKKKYGVAWEKYCQRVPYRIFPYIY</sequence>